<organism>
    <name type="scientific">Oryza sativa subsp. indica</name>
    <name type="common">Rice</name>
    <dbReference type="NCBI Taxonomy" id="39946"/>
    <lineage>
        <taxon>Eukaryota</taxon>
        <taxon>Viridiplantae</taxon>
        <taxon>Streptophyta</taxon>
        <taxon>Embryophyta</taxon>
        <taxon>Tracheophyta</taxon>
        <taxon>Spermatophyta</taxon>
        <taxon>Magnoliopsida</taxon>
        <taxon>Liliopsida</taxon>
        <taxon>Poales</taxon>
        <taxon>Poaceae</taxon>
        <taxon>BOP clade</taxon>
        <taxon>Oryzoideae</taxon>
        <taxon>Oryzeae</taxon>
        <taxon>Oryzinae</taxon>
        <taxon>Oryza</taxon>
        <taxon>Oryza sativa</taxon>
    </lineage>
</organism>
<gene>
    <name evidence="2" type="primary">CYP90A4</name>
    <name evidence="5" type="ORF">OsI_37414</name>
</gene>
<dbReference type="EC" id="1.14.99.-" evidence="2"/>
<dbReference type="EMBL" id="CM000137">
    <property type="protein sequence ID" value="EAY82211.1"/>
    <property type="molecule type" value="Genomic_DNA"/>
</dbReference>
<dbReference type="SMR" id="A2ZHX7"/>
<dbReference type="STRING" id="39946.A2ZHX7"/>
<dbReference type="EnsemblPlants" id="BGIOSGA036662-TA">
    <property type="protein sequence ID" value="BGIOSGA036662-PA"/>
    <property type="gene ID" value="BGIOSGA036662"/>
</dbReference>
<dbReference type="EnsemblPlants" id="OsGoSa_12g0002930.01">
    <property type="protein sequence ID" value="OsGoSa_12g0002930.01"/>
    <property type="gene ID" value="OsGoSa_12g0002930"/>
</dbReference>
<dbReference type="EnsemblPlants" id="OsIR64_12g0002900.01">
    <property type="protein sequence ID" value="OsIR64_12g0002900.01"/>
    <property type="gene ID" value="OsIR64_12g0002900"/>
</dbReference>
<dbReference type="EnsemblPlants" id="OsKYG_12g0002900.01">
    <property type="protein sequence ID" value="OsKYG_12g0002900.01"/>
    <property type="gene ID" value="OsKYG_12g0002900"/>
</dbReference>
<dbReference type="EnsemblPlants" id="OsLima_12g0002680.01">
    <property type="protein sequence ID" value="OsLima_12g0002680.01"/>
    <property type="gene ID" value="OsLima_12g0002680"/>
</dbReference>
<dbReference type="EnsemblPlants" id="OsLiXu_12g0002860.01">
    <property type="protein sequence ID" value="OsLiXu_12g0002860.01"/>
    <property type="gene ID" value="OsLiXu_12g0002860"/>
</dbReference>
<dbReference type="EnsemblPlants" id="OsMH63_12G002960_01">
    <property type="protein sequence ID" value="OsMH63_12G002960_01"/>
    <property type="gene ID" value="OsMH63_12G002960"/>
</dbReference>
<dbReference type="EnsemblPlants" id="OsPr106_12g0002920.01">
    <property type="protein sequence ID" value="OsPr106_12g0002920.01"/>
    <property type="gene ID" value="OsPr106_12g0002920"/>
</dbReference>
<dbReference type="EnsemblPlants" id="OsZS97_12G002880_01">
    <property type="protein sequence ID" value="OsZS97_12G002880_01"/>
    <property type="gene ID" value="OsZS97_12G002880"/>
</dbReference>
<dbReference type="Gramene" id="BGIOSGA036662-TA">
    <property type="protein sequence ID" value="BGIOSGA036662-PA"/>
    <property type="gene ID" value="BGIOSGA036662"/>
</dbReference>
<dbReference type="Gramene" id="OsGoSa_12g0002930.01">
    <property type="protein sequence ID" value="OsGoSa_12g0002930.01"/>
    <property type="gene ID" value="OsGoSa_12g0002930"/>
</dbReference>
<dbReference type="Gramene" id="OsIR64_12g0002900.01">
    <property type="protein sequence ID" value="OsIR64_12g0002900.01"/>
    <property type="gene ID" value="OsIR64_12g0002900"/>
</dbReference>
<dbReference type="Gramene" id="OsKYG_12g0002900.01">
    <property type="protein sequence ID" value="OsKYG_12g0002900.01"/>
    <property type="gene ID" value="OsKYG_12g0002900"/>
</dbReference>
<dbReference type="Gramene" id="OsLima_12g0002680.01">
    <property type="protein sequence ID" value="OsLima_12g0002680.01"/>
    <property type="gene ID" value="OsLima_12g0002680"/>
</dbReference>
<dbReference type="Gramene" id="OsLiXu_12g0002860.01">
    <property type="protein sequence ID" value="OsLiXu_12g0002860.01"/>
    <property type="gene ID" value="OsLiXu_12g0002860"/>
</dbReference>
<dbReference type="Gramene" id="OsMH63_12G002960_01">
    <property type="protein sequence ID" value="OsMH63_12G002960_01"/>
    <property type="gene ID" value="OsMH63_12G002960"/>
</dbReference>
<dbReference type="Gramene" id="OsPr106_12g0002920.01">
    <property type="protein sequence ID" value="OsPr106_12g0002920.01"/>
    <property type="gene ID" value="OsPr106_12g0002920"/>
</dbReference>
<dbReference type="Gramene" id="OsZS97_12G002880_01">
    <property type="protein sequence ID" value="OsZS97_12G002880_01"/>
    <property type="gene ID" value="OsZS97_12G002880"/>
</dbReference>
<dbReference type="HOGENOM" id="CLU_001570_15_5_1"/>
<dbReference type="OMA" id="IEPCEWT"/>
<dbReference type="OrthoDB" id="3945418at2759"/>
<dbReference type="UniPathway" id="UPA00381"/>
<dbReference type="Proteomes" id="UP000007015">
    <property type="component" value="Chromosome 12"/>
</dbReference>
<dbReference type="GO" id="GO:0016020">
    <property type="term" value="C:membrane"/>
    <property type="evidence" value="ECO:0007669"/>
    <property type="project" value="UniProtKB-SubCell"/>
</dbReference>
<dbReference type="GO" id="GO:0080132">
    <property type="term" value="F:fatty acid 2-hydroxylase activity"/>
    <property type="evidence" value="ECO:0007669"/>
    <property type="project" value="EnsemblPlants"/>
</dbReference>
<dbReference type="GO" id="GO:0020037">
    <property type="term" value="F:heme binding"/>
    <property type="evidence" value="ECO:0007669"/>
    <property type="project" value="InterPro"/>
</dbReference>
<dbReference type="GO" id="GO:0005506">
    <property type="term" value="F:iron ion binding"/>
    <property type="evidence" value="ECO:0007669"/>
    <property type="project" value="InterPro"/>
</dbReference>
<dbReference type="GO" id="GO:0016132">
    <property type="term" value="P:brassinosteroid biosynthetic process"/>
    <property type="evidence" value="ECO:0007669"/>
    <property type="project" value="UniProtKB-UniPathway"/>
</dbReference>
<dbReference type="GO" id="GO:0010268">
    <property type="term" value="P:brassinosteroid homeostasis"/>
    <property type="evidence" value="ECO:0007669"/>
    <property type="project" value="TreeGrafter"/>
</dbReference>
<dbReference type="GO" id="GO:0016125">
    <property type="term" value="P:sterol metabolic process"/>
    <property type="evidence" value="ECO:0007669"/>
    <property type="project" value="TreeGrafter"/>
</dbReference>
<dbReference type="CDD" id="cd11043">
    <property type="entry name" value="CYP90-like"/>
    <property type="match status" value="1"/>
</dbReference>
<dbReference type="FunFam" id="1.10.630.10:FF:000046">
    <property type="entry name" value="Cytochrome P450 90A1"/>
    <property type="match status" value="1"/>
</dbReference>
<dbReference type="Gene3D" id="1.10.630.10">
    <property type="entry name" value="Cytochrome P450"/>
    <property type="match status" value="1"/>
</dbReference>
<dbReference type="InterPro" id="IPR001128">
    <property type="entry name" value="Cyt_P450"/>
</dbReference>
<dbReference type="InterPro" id="IPR017972">
    <property type="entry name" value="Cyt_P450_CS"/>
</dbReference>
<dbReference type="InterPro" id="IPR002401">
    <property type="entry name" value="Cyt_P450_E_grp-I"/>
</dbReference>
<dbReference type="InterPro" id="IPR036396">
    <property type="entry name" value="Cyt_P450_sf"/>
</dbReference>
<dbReference type="PANTHER" id="PTHR24286:SF44">
    <property type="entry name" value="3BETA,22ALPHA-DIHYDROXYSTEROID 3-DEHYDROGENASE"/>
    <property type="match status" value="1"/>
</dbReference>
<dbReference type="PANTHER" id="PTHR24286">
    <property type="entry name" value="CYTOCHROME P450 26"/>
    <property type="match status" value="1"/>
</dbReference>
<dbReference type="Pfam" id="PF00067">
    <property type="entry name" value="p450"/>
    <property type="match status" value="1"/>
</dbReference>
<dbReference type="PRINTS" id="PR00463">
    <property type="entry name" value="EP450I"/>
</dbReference>
<dbReference type="PRINTS" id="PR00385">
    <property type="entry name" value="P450"/>
</dbReference>
<dbReference type="SUPFAM" id="SSF48264">
    <property type="entry name" value="Cytochrome P450"/>
    <property type="match status" value="1"/>
</dbReference>
<dbReference type="PROSITE" id="PS00086">
    <property type="entry name" value="CYTOCHROME_P450"/>
    <property type="match status" value="1"/>
</dbReference>
<protein>
    <recommendedName>
        <fullName evidence="2">Cytochrome P450 90A4</fullName>
        <shortName evidence="2">OsCYP90A4</shortName>
        <ecNumber evidence="2">1.14.99.-</ecNumber>
    </recommendedName>
</protein>
<feature type="chain" id="PRO_0000455309" description="Cytochrome P450 90A4">
    <location>
        <begin position="1"/>
        <end position="501"/>
    </location>
</feature>
<feature type="transmembrane region" description="Helical" evidence="3">
    <location>
        <begin position="2"/>
        <end position="22"/>
    </location>
</feature>
<feature type="binding site" description="axial binding residue" evidence="1">
    <location>
        <position position="446"/>
    </location>
    <ligand>
        <name>heme</name>
        <dbReference type="ChEBI" id="CHEBI:30413"/>
    </ligand>
    <ligandPart>
        <name>Fe</name>
        <dbReference type="ChEBI" id="CHEBI:18248"/>
    </ligandPart>
</feature>
<evidence type="ECO:0000250" key="1">
    <source>
        <dbReference type="UniProtKB" id="P04798"/>
    </source>
</evidence>
<evidence type="ECO:0000250" key="2">
    <source>
        <dbReference type="UniProtKB" id="Q5CCK1"/>
    </source>
</evidence>
<evidence type="ECO:0000255" key="3"/>
<evidence type="ECO:0000305" key="4"/>
<evidence type="ECO:0000312" key="5">
    <source>
        <dbReference type="EMBL" id="EAY82211.1"/>
    </source>
</evidence>
<name>C90A4_ORYSI</name>
<comment type="function">
    <text evidence="1">Catalyzes the C23-alpha-hydroxylation step in brassinosteroid biosynthesis (By similarity). Converts 6-deoxocathasterone to 6-deoxoteasterone in the late C6-oxidation pathway and cathasterone to teasterone (TE) in the early C6-oxidation pathway of brassinolide (BL) biosynthesis (By similarity).</text>
</comment>
<comment type="cofactor">
    <cofactor evidence="1">
        <name>heme</name>
        <dbReference type="ChEBI" id="CHEBI:30413"/>
    </cofactor>
</comment>
<comment type="pathway">
    <text evidence="1">Plant hormone biosynthesis; brassinosteroid biosynthesis.</text>
</comment>
<comment type="subcellular location">
    <subcellularLocation>
        <location evidence="3">Membrane</location>
        <topology evidence="3">Single-pass membrane protein</topology>
    </subcellularLocation>
</comment>
<comment type="similarity">
    <text evidence="4">Belongs to the cytochrome P450 family.</text>
</comment>
<keyword id="KW-0349">Heme</keyword>
<keyword id="KW-0408">Iron</keyword>
<keyword id="KW-0472">Membrane</keyword>
<keyword id="KW-0479">Metal-binding</keyword>
<keyword id="KW-0503">Monooxygenase</keyword>
<keyword id="KW-0560">Oxidoreductase</keyword>
<keyword id="KW-1185">Reference proteome</keyword>
<keyword id="KW-0812">Transmembrane</keyword>
<keyword id="KW-1133">Transmembrane helix</keyword>
<proteinExistence type="inferred from homology"/>
<sequence>MAAAALLLLAAAAAAVVVAMALRWLLLLGGPAAGRQGKRARMPPGSTGLPLIGETLRLISAYKTPNPEPFIDERVARHGGVFTTHVFGERTVFSADPAFNRLLLAAEGRAVHSSYPSSIATLLGARSLLLTRGAAHKRLHSLTLTRLGRPASPPLLAHIDRLVLATMRQWEPAATVRLMDEAKKITFNLTVKQLVSIEPGPWTESLRREYVKLIDGFFSIPFPLACLLPFTTYGQALKARKKVAGALREVIKKRMEEKAENGGSIGDDEGKKEKKDMVEELLQAEGGSFSEEEMVDFCLSLLVAGYETTSVLMTLAVKFLTETPAALAELKEEHANIRDMKGKNQPLEWSDYKSMPFTQCVINETLRVGNIISGVFRRANTDIHYKDYTIPKGCKIFASFRAVHLNNEHYENARTFNPWRWQINNKLQNAVGANIFTPFGGGPRLCPGYELARVVVSIFLHHLVTRFSWEETEEDRLVFFPTTRTLKGYPINLRLLSESIC</sequence>
<reference key="1">
    <citation type="journal article" date="2005" name="PLoS Biol.">
        <title>The genomes of Oryza sativa: a history of duplications.</title>
        <authorList>
            <person name="Yu J."/>
            <person name="Wang J."/>
            <person name="Lin W."/>
            <person name="Li S."/>
            <person name="Li H."/>
            <person name="Zhou J."/>
            <person name="Ni P."/>
            <person name="Dong W."/>
            <person name="Hu S."/>
            <person name="Zeng C."/>
            <person name="Zhang J."/>
            <person name="Zhang Y."/>
            <person name="Li R."/>
            <person name="Xu Z."/>
            <person name="Li S."/>
            <person name="Li X."/>
            <person name="Zheng H."/>
            <person name="Cong L."/>
            <person name="Lin L."/>
            <person name="Yin J."/>
            <person name="Geng J."/>
            <person name="Li G."/>
            <person name="Shi J."/>
            <person name="Liu J."/>
            <person name="Lv H."/>
            <person name="Li J."/>
            <person name="Wang J."/>
            <person name="Deng Y."/>
            <person name="Ran L."/>
            <person name="Shi X."/>
            <person name="Wang X."/>
            <person name="Wu Q."/>
            <person name="Li C."/>
            <person name="Ren X."/>
            <person name="Wang J."/>
            <person name="Wang X."/>
            <person name="Li D."/>
            <person name="Liu D."/>
            <person name="Zhang X."/>
            <person name="Ji Z."/>
            <person name="Zhao W."/>
            <person name="Sun Y."/>
            <person name="Zhang Z."/>
            <person name="Bao J."/>
            <person name="Han Y."/>
            <person name="Dong L."/>
            <person name="Ji J."/>
            <person name="Chen P."/>
            <person name="Wu S."/>
            <person name="Liu J."/>
            <person name="Xiao Y."/>
            <person name="Bu D."/>
            <person name="Tan J."/>
            <person name="Yang L."/>
            <person name="Ye C."/>
            <person name="Zhang J."/>
            <person name="Xu J."/>
            <person name="Zhou Y."/>
            <person name="Yu Y."/>
            <person name="Zhang B."/>
            <person name="Zhuang S."/>
            <person name="Wei H."/>
            <person name="Liu B."/>
            <person name="Lei M."/>
            <person name="Yu H."/>
            <person name="Li Y."/>
            <person name="Xu H."/>
            <person name="Wei S."/>
            <person name="He X."/>
            <person name="Fang L."/>
            <person name="Zhang Z."/>
            <person name="Zhang Y."/>
            <person name="Huang X."/>
            <person name="Su Z."/>
            <person name="Tong W."/>
            <person name="Li J."/>
            <person name="Tong Z."/>
            <person name="Li S."/>
            <person name="Ye J."/>
            <person name="Wang L."/>
            <person name="Fang L."/>
            <person name="Lei T."/>
            <person name="Chen C.-S."/>
            <person name="Chen H.-C."/>
            <person name="Xu Z."/>
            <person name="Li H."/>
            <person name="Huang H."/>
            <person name="Zhang F."/>
            <person name="Xu H."/>
            <person name="Li N."/>
            <person name="Zhao C."/>
            <person name="Li S."/>
            <person name="Dong L."/>
            <person name="Huang Y."/>
            <person name="Li L."/>
            <person name="Xi Y."/>
            <person name="Qi Q."/>
            <person name="Li W."/>
            <person name="Zhang B."/>
            <person name="Hu W."/>
            <person name="Zhang Y."/>
            <person name="Tian X."/>
            <person name="Jiao Y."/>
            <person name="Liang X."/>
            <person name="Jin J."/>
            <person name="Gao L."/>
            <person name="Zheng W."/>
            <person name="Hao B."/>
            <person name="Liu S.-M."/>
            <person name="Wang W."/>
            <person name="Yuan L."/>
            <person name="Cao M."/>
            <person name="McDermott J."/>
            <person name="Samudrala R."/>
            <person name="Wang J."/>
            <person name="Wong G.K.-S."/>
            <person name="Yang H."/>
        </authorList>
    </citation>
    <scope>NUCLEOTIDE SEQUENCE [LARGE SCALE GENOMIC DNA]</scope>
    <source>
        <strain>cv. 93-11</strain>
    </source>
</reference>
<accession>A2ZHX7</accession>